<proteinExistence type="inferred from homology"/>
<dbReference type="EMBL" id="AJ965256">
    <property type="protein sequence ID" value="CAI83734.1"/>
    <property type="molecule type" value="Genomic_DNA"/>
</dbReference>
<dbReference type="RefSeq" id="WP_011310072.1">
    <property type="nucleotide sequence ID" value="NC_007356.1"/>
</dbReference>
<dbReference type="SMR" id="Q3ZZW3"/>
<dbReference type="KEGG" id="deh:cbdbA1738"/>
<dbReference type="HOGENOM" id="CLU_160655_3_1_0"/>
<dbReference type="Proteomes" id="UP000000433">
    <property type="component" value="Chromosome"/>
</dbReference>
<dbReference type="GO" id="GO:0005829">
    <property type="term" value="C:cytosol"/>
    <property type="evidence" value="ECO:0007669"/>
    <property type="project" value="TreeGrafter"/>
</dbReference>
<dbReference type="GO" id="GO:0015935">
    <property type="term" value="C:small ribosomal subunit"/>
    <property type="evidence" value="ECO:0007669"/>
    <property type="project" value="TreeGrafter"/>
</dbReference>
<dbReference type="GO" id="GO:0070181">
    <property type="term" value="F:small ribosomal subunit rRNA binding"/>
    <property type="evidence" value="ECO:0007669"/>
    <property type="project" value="TreeGrafter"/>
</dbReference>
<dbReference type="GO" id="GO:0003735">
    <property type="term" value="F:structural constituent of ribosome"/>
    <property type="evidence" value="ECO:0007669"/>
    <property type="project" value="InterPro"/>
</dbReference>
<dbReference type="GO" id="GO:0006412">
    <property type="term" value="P:translation"/>
    <property type="evidence" value="ECO:0007669"/>
    <property type="project" value="UniProtKB-UniRule"/>
</dbReference>
<dbReference type="Gene3D" id="1.20.58.110">
    <property type="entry name" value="Ribosomal protein S20"/>
    <property type="match status" value="1"/>
</dbReference>
<dbReference type="HAMAP" id="MF_00500">
    <property type="entry name" value="Ribosomal_bS20"/>
    <property type="match status" value="1"/>
</dbReference>
<dbReference type="InterPro" id="IPR002583">
    <property type="entry name" value="Ribosomal_bS20"/>
</dbReference>
<dbReference type="InterPro" id="IPR036510">
    <property type="entry name" value="Ribosomal_bS20_sf"/>
</dbReference>
<dbReference type="NCBIfam" id="TIGR00029">
    <property type="entry name" value="S20"/>
    <property type="match status" value="1"/>
</dbReference>
<dbReference type="PANTHER" id="PTHR33398">
    <property type="entry name" value="30S RIBOSOMAL PROTEIN S20"/>
    <property type="match status" value="1"/>
</dbReference>
<dbReference type="PANTHER" id="PTHR33398:SF1">
    <property type="entry name" value="SMALL RIBOSOMAL SUBUNIT PROTEIN BS20C"/>
    <property type="match status" value="1"/>
</dbReference>
<dbReference type="Pfam" id="PF01649">
    <property type="entry name" value="Ribosomal_S20p"/>
    <property type="match status" value="1"/>
</dbReference>
<dbReference type="SUPFAM" id="SSF46992">
    <property type="entry name" value="Ribosomal protein S20"/>
    <property type="match status" value="1"/>
</dbReference>
<feature type="chain" id="PRO_0000224965" description="Small ribosomal subunit protein bS20">
    <location>
        <begin position="1"/>
        <end position="88"/>
    </location>
</feature>
<feature type="region of interest" description="Disordered" evidence="2">
    <location>
        <begin position="1"/>
        <end position="29"/>
    </location>
</feature>
<feature type="compositionally biased region" description="Basic and acidic residues" evidence="2">
    <location>
        <begin position="1"/>
        <end position="23"/>
    </location>
</feature>
<name>RS20_DEHMC</name>
<sequence length="88" mass="9581">MPNTKSAEKALRVADANRQENRRAKSQVKTSLTKVKKLVDAGSINEAETAAVSAQSNLDKAAEKGIIHPKNAARRKSRLMKKLNQAAK</sequence>
<accession>Q3ZZW3</accession>
<keyword id="KW-0687">Ribonucleoprotein</keyword>
<keyword id="KW-0689">Ribosomal protein</keyword>
<keyword id="KW-0694">RNA-binding</keyword>
<keyword id="KW-0699">rRNA-binding</keyword>
<comment type="function">
    <text evidence="1">Binds directly to 16S ribosomal RNA.</text>
</comment>
<comment type="similarity">
    <text evidence="1">Belongs to the bacterial ribosomal protein bS20 family.</text>
</comment>
<reference key="1">
    <citation type="journal article" date="2005" name="Nat. Biotechnol.">
        <title>Genome sequence of the chlorinated compound-respiring bacterium Dehalococcoides species strain CBDB1.</title>
        <authorList>
            <person name="Kube M."/>
            <person name="Beck A."/>
            <person name="Zinder S.H."/>
            <person name="Kuhl H."/>
            <person name="Reinhardt R."/>
            <person name="Adrian L."/>
        </authorList>
    </citation>
    <scope>NUCLEOTIDE SEQUENCE [LARGE SCALE GENOMIC DNA]</scope>
    <source>
        <strain>CBDB1</strain>
    </source>
</reference>
<gene>
    <name evidence="1" type="primary">rpsT</name>
    <name type="ordered locus">cbdbA1738</name>
</gene>
<evidence type="ECO:0000255" key="1">
    <source>
        <dbReference type="HAMAP-Rule" id="MF_00500"/>
    </source>
</evidence>
<evidence type="ECO:0000256" key="2">
    <source>
        <dbReference type="SAM" id="MobiDB-lite"/>
    </source>
</evidence>
<evidence type="ECO:0000305" key="3"/>
<organism>
    <name type="scientific">Dehalococcoides mccartyi (strain CBDB1)</name>
    <dbReference type="NCBI Taxonomy" id="255470"/>
    <lineage>
        <taxon>Bacteria</taxon>
        <taxon>Bacillati</taxon>
        <taxon>Chloroflexota</taxon>
        <taxon>Dehalococcoidia</taxon>
        <taxon>Dehalococcoidales</taxon>
        <taxon>Dehalococcoidaceae</taxon>
        <taxon>Dehalococcoides</taxon>
    </lineage>
</organism>
<protein>
    <recommendedName>
        <fullName evidence="1">Small ribosomal subunit protein bS20</fullName>
    </recommendedName>
    <alternativeName>
        <fullName evidence="3">30S ribosomal protein S20</fullName>
    </alternativeName>
</protein>